<protein>
    <recommendedName>
        <fullName evidence="1">Large ribosomal subunit protein bL35</fullName>
    </recommendedName>
    <alternativeName>
        <fullName evidence="2">50S ribosomal protein L35</fullName>
    </alternativeName>
</protein>
<organism>
    <name type="scientific">Ruegeria sp. (strain TM1040)</name>
    <name type="common">Silicibacter sp.</name>
    <dbReference type="NCBI Taxonomy" id="292414"/>
    <lineage>
        <taxon>Bacteria</taxon>
        <taxon>Pseudomonadati</taxon>
        <taxon>Pseudomonadota</taxon>
        <taxon>Alphaproteobacteria</taxon>
        <taxon>Rhodobacterales</taxon>
        <taxon>Roseobacteraceae</taxon>
        <taxon>Ruegeria</taxon>
    </lineage>
</organism>
<sequence>MPKMKTKSSAKKRFKVTATGKVMAGQAGKRHGMIKRHKKFIRDARGTTTLSAPDAKIVKGFMPYDR</sequence>
<accession>Q1GDM0</accession>
<feature type="chain" id="PRO_0000258755" description="Large ribosomal subunit protein bL35">
    <location>
        <begin position="1"/>
        <end position="66"/>
    </location>
</feature>
<keyword id="KW-1185">Reference proteome</keyword>
<keyword id="KW-0687">Ribonucleoprotein</keyword>
<keyword id="KW-0689">Ribosomal protein</keyword>
<dbReference type="EMBL" id="CP000377">
    <property type="protein sequence ID" value="ABF65246.1"/>
    <property type="molecule type" value="Genomic_DNA"/>
</dbReference>
<dbReference type="RefSeq" id="WP_009178285.1">
    <property type="nucleotide sequence ID" value="NC_008044.1"/>
</dbReference>
<dbReference type="SMR" id="Q1GDM0"/>
<dbReference type="STRING" id="292414.TM1040_2514"/>
<dbReference type="KEGG" id="sit:TM1040_2514"/>
<dbReference type="eggNOG" id="COG0291">
    <property type="taxonomic scope" value="Bacteria"/>
</dbReference>
<dbReference type="HOGENOM" id="CLU_169643_2_1_5"/>
<dbReference type="OrthoDB" id="9804851at2"/>
<dbReference type="Proteomes" id="UP000000636">
    <property type="component" value="Chromosome"/>
</dbReference>
<dbReference type="GO" id="GO:0022625">
    <property type="term" value="C:cytosolic large ribosomal subunit"/>
    <property type="evidence" value="ECO:0007669"/>
    <property type="project" value="TreeGrafter"/>
</dbReference>
<dbReference type="GO" id="GO:0003735">
    <property type="term" value="F:structural constituent of ribosome"/>
    <property type="evidence" value="ECO:0007669"/>
    <property type="project" value="InterPro"/>
</dbReference>
<dbReference type="GO" id="GO:0006412">
    <property type="term" value="P:translation"/>
    <property type="evidence" value="ECO:0007669"/>
    <property type="project" value="UniProtKB-UniRule"/>
</dbReference>
<dbReference type="FunFam" id="4.10.410.60:FF:000001">
    <property type="entry name" value="50S ribosomal protein L35"/>
    <property type="match status" value="1"/>
</dbReference>
<dbReference type="Gene3D" id="4.10.410.60">
    <property type="match status" value="1"/>
</dbReference>
<dbReference type="HAMAP" id="MF_00514">
    <property type="entry name" value="Ribosomal_bL35"/>
    <property type="match status" value="1"/>
</dbReference>
<dbReference type="InterPro" id="IPR001706">
    <property type="entry name" value="Ribosomal_bL35"/>
</dbReference>
<dbReference type="InterPro" id="IPR021137">
    <property type="entry name" value="Ribosomal_bL35-like"/>
</dbReference>
<dbReference type="InterPro" id="IPR018265">
    <property type="entry name" value="Ribosomal_bL35_CS"/>
</dbReference>
<dbReference type="InterPro" id="IPR037229">
    <property type="entry name" value="Ribosomal_bL35_sf"/>
</dbReference>
<dbReference type="NCBIfam" id="TIGR00001">
    <property type="entry name" value="rpmI_bact"/>
    <property type="match status" value="1"/>
</dbReference>
<dbReference type="PANTHER" id="PTHR33343">
    <property type="entry name" value="54S RIBOSOMAL PROTEIN BL35M"/>
    <property type="match status" value="1"/>
</dbReference>
<dbReference type="PANTHER" id="PTHR33343:SF1">
    <property type="entry name" value="LARGE RIBOSOMAL SUBUNIT PROTEIN BL35M"/>
    <property type="match status" value="1"/>
</dbReference>
<dbReference type="Pfam" id="PF01632">
    <property type="entry name" value="Ribosomal_L35p"/>
    <property type="match status" value="1"/>
</dbReference>
<dbReference type="PRINTS" id="PR00064">
    <property type="entry name" value="RIBOSOMALL35"/>
</dbReference>
<dbReference type="SUPFAM" id="SSF143034">
    <property type="entry name" value="L35p-like"/>
    <property type="match status" value="1"/>
</dbReference>
<dbReference type="PROSITE" id="PS00936">
    <property type="entry name" value="RIBOSOMAL_L35"/>
    <property type="match status" value="1"/>
</dbReference>
<name>RL35_RUEST</name>
<evidence type="ECO:0000255" key="1">
    <source>
        <dbReference type="HAMAP-Rule" id="MF_00514"/>
    </source>
</evidence>
<evidence type="ECO:0000305" key="2"/>
<comment type="similarity">
    <text evidence="1">Belongs to the bacterial ribosomal protein bL35 family.</text>
</comment>
<reference key="1">
    <citation type="submission" date="2006-05" db="EMBL/GenBank/DDBJ databases">
        <title>Complete sequence of chromosome of Silicibacter sp. TM1040.</title>
        <authorList>
            <consortium name="US DOE Joint Genome Institute"/>
            <person name="Copeland A."/>
            <person name="Lucas S."/>
            <person name="Lapidus A."/>
            <person name="Barry K."/>
            <person name="Detter J.C."/>
            <person name="Glavina del Rio T."/>
            <person name="Hammon N."/>
            <person name="Israni S."/>
            <person name="Dalin E."/>
            <person name="Tice H."/>
            <person name="Pitluck S."/>
            <person name="Brettin T."/>
            <person name="Bruce D."/>
            <person name="Han C."/>
            <person name="Tapia R."/>
            <person name="Goodwin L."/>
            <person name="Thompson L.S."/>
            <person name="Gilna P."/>
            <person name="Schmutz J."/>
            <person name="Larimer F."/>
            <person name="Land M."/>
            <person name="Hauser L."/>
            <person name="Kyrpides N."/>
            <person name="Kim E."/>
            <person name="Belas R."/>
            <person name="Moran M.A."/>
            <person name="Buchan A."/>
            <person name="Gonzalez J.M."/>
            <person name="Schell M.A."/>
            <person name="Sun F."/>
            <person name="Richardson P."/>
        </authorList>
    </citation>
    <scope>NUCLEOTIDE SEQUENCE [LARGE SCALE GENOMIC DNA]</scope>
    <source>
        <strain>TM1040</strain>
    </source>
</reference>
<proteinExistence type="inferred from homology"/>
<gene>
    <name evidence="1" type="primary">rpmI</name>
    <name type="ordered locus">TM1040_2514</name>
</gene>